<organism>
    <name type="scientific">Synechococcus elongatus (strain ATCC 33912 / PCC 7942 / FACHB-805)</name>
    <name type="common">Anacystis nidulans R2</name>
    <dbReference type="NCBI Taxonomy" id="1140"/>
    <lineage>
        <taxon>Bacteria</taxon>
        <taxon>Bacillati</taxon>
        <taxon>Cyanobacteriota</taxon>
        <taxon>Cyanophyceae</taxon>
        <taxon>Synechococcales</taxon>
        <taxon>Synechococcaceae</taxon>
        <taxon>Synechococcus</taxon>
    </lineage>
</organism>
<gene>
    <name evidence="1" type="primary">uvrC</name>
    <name type="ordered locus">Synpcc7942_1945</name>
</gene>
<dbReference type="EMBL" id="CP000100">
    <property type="protein sequence ID" value="ABB57975.1"/>
    <property type="molecule type" value="Genomic_DNA"/>
</dbReference>
<dbReference type="RefSeq" id="WP_011244459.1">
    <property type="nucleotide sequence ID" value="NZ_JACJTX010000001.1"/>
</dbReference>
<dbReference type="SMR" id="Q31LU4"/>
<dbReference type="STRING" id="1140.Synpcc7942_1945"/>
<dbReference type="PaxDb" id="1140-Synpcc7942_1945"/>
<dbReference type="GeneID" id="72430818"/>
<dbReference type="KEGG" id="syf:Synpcc7942_1945"/>
<dbReference type="eggNOG" id="COG0322">
    <property type="taxonomic scope" value="Bacteria"/>
</dbReference>
<dbReference type="HOGENOM" id="CLU_014841_3_2_3"/>
<dbReference type="OrthoDB" id="9804933at2"/>
<dbReference type="BioCyc" id="SYNEL:SYNPCC7942_1945-MONOMER"/>
<dbReference type="Proteomes" id="UP000889800">
    <property type="component" value="Chromosome"/>
</dbReference>
<dbReference type="GO" id="GO:0005737">
    <property type="term" value="C:cytoplasm"/>
    <property type="evidence" value="ECO:0007669"/>
    <property type="project" value="UniProtKB-SubCell"/>
</dbReference>
<dbReference type="GO" id="GO:0009380">
    <property type="term" value="C:excinuclease repair complex"/>
    <property type="evidence" value="ECO:0007669"/>
    <property type="project" value="InterPro"/>
</dbReference>
<dbReference type="GO" id="GO:0003677">
    <property type="term" value="F:DNA binding"/>
    <property type="evidence" value="ECO:0007669"/>
    <property type="project" value="UniProtKB-UniRule"/>
</dbReference>
<dbReference type="GO" id="GO:0009381">
    <property type="term" value="F:excinuclease ABC activity"/>
    <property type="evidence" value="ECO:0007669"/>
    <property type="project" value="UniProtKB-UniRule"/>
</dbReference>
<dbReference type="GO" id="GO:0006289">
    <property type="term" value="P:nucleotide-excision repair"/>
    <property type="evidence" value="ECO:0007669"/>
    <property type="project" value="UniProtKB-UniRule"/>
</dbReference>
<dbReference type="GO" id="GO:0009432">
    <property type="term" value="P:SOS response"/>
    <property type="evidence" value="ECO:0007669"/>
    <property type="project" value="UniProtKB-UniRule"/>
</dbReference>
<dbReference type="CDD" id="cd10434">
    <property type="entry name" value="GIY-YIG_UvrC_Cho"/>
    <property type="match status" value="1"/>
</dbReference>
<dbReference type="FunFam" id="3.40.1440.10:FF:000001">
    <property type="entry name" value="UvrABC system protein C"/>
    <property type="match status" value="1"/>
</dbReference>
<dbReference type="Gene3D" id="1.10.150.20">
    <property type="entry name" value="5' to 3' exonuclease, C-terminal subdomain"/>
    <property type="match status" value="1"/>
</dbReference>
<dbReference type="Gene3D" id="3.40.1440.10">
    <property type="entry name" value="GIY-YIG endonuclease"/>
    <property type="match status" value="1"/>
</dbReference>
<dbReference type="Gene3D" id="4.10.860.10">
    <property type="entry name" value="UVR domain"/>
    <property type="match status" value="1"/>
</dbReference>
<dbReference type="Gene3D" id="3.30.420.340">
    <property type="entry name" value="UvrC, RNAse H endonuclease domain"/>
    <property type="match status" value="1"/>
</dbReference>
<dbReference type="HAMAP" id="MF_00203">
    <property type="entry name" value="UvrC"/>
    <property type="match status" value="1"/>
</dbReference>
<dbReference type="InterPro" id="IPR041663">
    <property type="entry name" value="DisA/LigA_HHH"/>
</dbReference>
<dbReference type="InterPro" id="IPR000305">
    <property type="entry name" value="GIY-YIG_endonuc"/>
</dbReference>
<dbReference type="InterPro" id="IPR035901">
    <property type="entry name" value="GIY-YIG_endonuc_sf"/>
</dbReference>
<dbReference type="InterPro" id="IPR047296">
    <property type="entry name" value="GIY-YIG_UvrC_Cho"/>
</dbReference>
<dbReference type="InterPro" id="IPR010994">
    <property type="entry name" value="RuvA_2-like"/>
</dbReference>
<dbReference type="InterPro" id="IPR001943">
    <property type="entry name" value="UVR_dom"/>
</dbReference>
<dbReference type="InterPro" id="IPR036876">
    <property type="entry name" value="UVR_dom_sf"/>
</dbReference>
<dbReference type="InterPro" id="IPR050066">
    <property type="entry name" value="UvrABC_protein_C"/>
</dbReference>
<dbReference type="InterPro" id="IPR004791">
    <property type="entry name" value="UvrC"/>
</dbReference>
<dbReference type="InterPro" id="IPR001162">
    <property type="entry name" value="UvrC_RNase_H_dom"/>
</dbReference>
<dbReference type="InterPro" id="IPR038476">
    <property type="entry name" value="UvrC_RNase_H_dom_sf"/>
</dbReference>
<dbReference type="NCBIfam" id="NF001824">
    <property type="entry name" value="PRK00558.1-5"/>
    <property type="match status" value="1"/>
</dbReference>
<dbReference type="NCBIfam" id="TIGR00194">
    <property type="entry name" value="uvrC"/>
    <property type="match status" value="1"/>
</dbReference>
<dbReference type="PANTHER" id="PTHR30562:SF1">
    <property type="entry name" value="UVRABC SYSTEM PROTEIN C"/>
    <property type="match status" value="1"/>
</dbReference>
<dbReference type="PANTHER" id="PTHR30562">
    <property type="entry name" value="UVRC/OXIDOREDUCTASE"/>
    <property type="match status" value="1"/>
</dbReference>
<dbReference type="Pfam" id="PF01541">
    <property type="entry name" value="GIY-YIG"/>
    <property type="match status" value="1"/>
</dbReference>
<dbReference type="Pfam" id="PF12826">
    <property type="entry name" value="HHH_2"/>
    <property type="match status" value="1"/>
</dbReference>
<dbReference type="Pfam" id="PF02151">
    <property type="entry name" value="UVR"/>
    <property type="match status" value="1"/>
</dbReference>
<dbReference type="Pfam" id="PF22920">
    <property type="entry name" value="UvrC_RNaseH"/>
    <property type="match status" value="1"/>
</dbReference>
<dbReference type="Pfam" id="PF08459">
    <property type="entry name" value="UvrC_RNaseH_dom"/>
    <property type="match status" value="1"/>
</dbReference>
<dbReference type="SMART" id="SM00465">
    <property type="entry name" value="GIYc"/>
    <property type="match status" value="1"/>
</dbReference>
<dbReference type="SUPFAM" id="SSF46600">
    <property type="entry name" value="C-terminal UvrC-binding domain of UvrB"/>
    <property type="match status" value="1"/>
</dbReference>
<dbReference type="SUPFAM" id="SSF82771">
    <property type="entry name" value="GIY-YIG endonuclease"/>
    <property type="match status" value="1"/>
</dbReference>
<dbReference type="SUPFAM" id="SSF47781">
    <property type="entry name" value="RuvA domain 2-like"/>
    <property type="match status" value="1"/>
</dbReference>
<dbReference type="PROSITE" id="PS50164">
    <property type="entry name" value="GIY_YIG"/>
    <property type="match status" value="1"/>
</dbReference>
<dbReference type="PROSITE" id="PS50151">
    <property type="entry name" value="UVR"/>
    <property type="match status" value="1"/>
</dbReference>
<dbReference type="PROSITE" id="PS50165">
    <property type="entry name" value="UVRC"/>
    <property type="match status" value="1"/>
</dbReference>
<reference key="1">
    <citation type="submission" date="2005-08" db="EMBL/GenBank/DDBJ databases">
        <title>Complete sequence of chromosome 1 of Synechococcus elongatus PCC 7942.</title>
        <authorList>
            <consortium name="US DOE Joint Genome Institute"/>
            <person name="Copeland A."/>
            <person name="Lucas S."/>
            <person name="Lapidus A."/>
            <person name="Barry K."/>
            <person name="Detter J.C."/>
            <person name="Glavina T."/>
            <person name="Hammon N."/>
            <person name="Israni S."/>
            <person name="Pitluck S."/>
            <person name="Schmutz J."/>
            <person name="Larimer F."/>
            <person name="Land M."/>
            <person name="Kyrpides N."/>
            <person name="Lykidis A."/>
            <person name="Golden S."/>
            <person name="Richardson P."/>
        </authorList>
    </citation>
    <scope>NUCLEOTIDE SEQUENCE [LARGE SCALE GENOMIC DNA]</scope>
    <source>
        <strain>ATCC 33912 / PCC 7942 / FACHB-805</strain>
    </source>
</reference>
<evidence type="ECO:0000255" key="1">
    <source>
        <dbReference type="HAMAP-Rule" id="MF_00203"/>
    </source>
</evidence>
<protein>
    <recommendedName>
        <fullName evidence="1">UvrABC system protein C</fullName>
        <shortName evidence="1">Protein UvrC</shortName>
    </recommendedName>
    <alternativeName>
        <fullName evidence="1">Excinuclease ABC subunit C</fullName>
    </alternativeName>
</protein>
<feature type="chain" id="PRO_0000264967" description="UvrABC system protein C">
    <location>
        <begin position="1"/>
        <end position="643"/>
    </location>
</feature>
<feature type="domain" description="GIY-YIG" evidence="1">
    <location>
        <begin position="25"/>
        <end position="104"/>
    </location>
</feature>
<feature type="domain" description="UVR" evidence="1">
    <location>
        <begin position="214"/>
        <end position="249"/>
    </location>
</feature>
<keyword id="KW-0963">Cytoplasm</keyword>
<keyword id="KW-0227">DNA damage</keyword>
<keyword id="KW-0228">DNA excision</keyword>
<keyword id="KW-0234">DNA repair</keyword>
<keyword id="KW-0267">Excision nuclease</keyword>
<keyword id="KW-1185">Reference proteome</keyword>
<keyword id="KW-0742">SOS response</keyword>
<sequence length="643" mass="73659">MIAATPMPLLKQPDRLEARLRELPAEPGVYFMRDASDRILYIGKSKKLRSRVRSYFRDLERLNPRINLMVRQVCEIEIIVTDTEAEALALEANLIKQHQPHFNVLLKDDKKYPYLCITWSDDYPRIFITRKRRLGNSRDRYYGPYVDTRLLRHTLFLVKRLFPLRQRPQPLFKDRTCLNYDIGRCPGVCQSLIRPDDYRKTLQKVAMIFQGRSSELVELLEAQMLQAAENLEFEKAAKIRDQIRGLEGLGAEQKVQLPDDRISRDAIALAMDEQHACIQLFQIRAGKLVGRLGFVADAQSGSAAAIAQRVLEEHYASVDSVEIPQEVLVQHDLPEAELLEVWLSERRGRKVEILSPQRQIKADLIAMVERNAEYELARTQQSAERHTASLIDLADLLDLPELPRRIEGYDISHIQGSDAVASQVVFIDGLPAKQHYRRYKIRNPEVRAGHSDDFASLAEVLHRRFRKFAEAKARGESLAPSEQRQGSLLRPDDLADFPDLVMIDGGKGQLSAVVEVLRNLNLLEDVKLCSLAKKREEIFLPGASDPLPTDAEQPGVQLLRRLRDEAHRFAVSFHRQKRTERMRRSRLDDIPGLGHKRQKELLAHFRSIDYLRLATPEQIAEVPGIGAVLAQQIWGYFHPSETA</sequence>
<name>UVRC_SYNE7</name>
<proteinExistence type="inferred from homology"/>
<comment type="function">
    <text evidence="1">The UvrABC repair system catalyzes the recognition and processing of DNA lesions. UvrC both incises the 5' and 3' sides of the lesion. The N-terminal half is responsible for the 3' incision and the C-terminal half is responsible for the 5' incision.</text>
</comment>
<comment type="subunit">
    <text evidence="1">Interacts with UvrB in an incision complex.</text>
</comment>
<comment type="subcellular location">
    <subcellularLocation>
        <location evidence="1">Cytoplasm</location>
    </subcellularLocation>
</comment>
<comment type="similarity">
    <text evidence="1">Belongs to the UvrC family.</text>
</comment>
<accession>Q31LU4</accession>